<gene>
    <name evidence="3" type="primary">MEF2C</name>
</gene>
<sequence>MGRKKIQITRIMDERNRQVTFTKRKFGLMKKAYELSVLCDCEIALIIFNSTNKLFQYASTDMDKVLLKYTEYNEPHESRTNSDIVETLRKKGLNGCDSPDPDADDSVGHSPESEDKYRKINEDIDLMISRQRLCAVPPPNFEMPVSIPVSSHNSLVYSNPVSSLGNPNLLPLAHPSLQRNSMSPGVTHRPPSAGNTGGLMGGDLTSGAGTSAGNGYGNPRNSPGLLVSPGNLNKNMQAKSPPPMNLGMNNRKPDLRVLIPPGSKNTMPSVSEDVDLLLNQRINNSQSAQSLATPVVSVATPTLPGQGMGGYPSAISTTYGTEYSLSSADLSSLSGFNTASALHLGSVTGWQQQHLHSMPPSALSQLGDRTTTPSRYPQHTRHEAGRSPVDSLSSCSSSYDGSDREDHRNEFHSPIGLTRPSPDERESPSVKRMRLSEGWAT</sequence>
<dbReference type="EMBL" id="BC112715">
    <property type="protein sequence ID" value="AAI12716.1"/>
    <property type="molecule type" value="mRNA"/>
</dbReference>
<dbReference type="RefSeq" id="NP_001039578.1">
    <property type="nucleotide sequence ID" value="NM_001046113.1"/>
</dbReference>
<dbReference type="SMR" id="Q2KIA0"/>
<dbReference type="FunCoup" id="Q2KIA0">
    <property type="interactions" value="1933"/>
</dbReference>
<dbReference type="STRING" id="9913.ENSBTAP00000034894"/>
<dbReference type="PaxDb" id="9913-ENSBTAP00000034894"/>
<dbReference type="GeneID" id="512254"/>
<dbReference type="KEGG" id="bta:512254"/>
<dbReference type="CTD" id="4208"/>
<dbReference type="VEuPathDB" id="HostDB:ENSBTAG00000020701"/>
<dbReference type="eggNOG" id="KOG0014">
    <property type="taxonomic scope" value="Eukaryota"/>
</dbReference>
<dbReference type="HOGENOM" id="CLU_022902_4_0_1"/>
<dbReference type="InParanoid" id="Q2KIA0"/>
<dbReference type="OrthoDB" id="1898716at2759"/>
<dbReference type="Reactome" id="R-BTA-525793">
    <property type="pathway name" value="Myogenesis"/>
</dbReference>
<dbReference type="Proteomes" id="UP000009136">
    <property type="component" value="Chromosome 7"/>
</dbReference>
<dbReference type="Bgee" id="ENSBTAG00000020701">
    <property type="expression patterns" value="Expressed in occipital lobe and 108 other cell types or tissues"/>
</dbReference>
<dbReference type="GO" id="GO:0005737">
    <property type="term" value="C:cytoplasm"/>
    <property type="evidence" value="ECO:0000250"/>
    <property type="project" value="UniProtKB"/>
</dbReference>
<dbReference type="GO" id="GO:0016607">
    <property type="term" value="C:nuclear speck"/>
    <property type="evidence" value="ECO:0000250"/>
    <property type="project" value="UniProtKB"/>
</dbReference>
<dbReference type="GO" id="GO:0005634">
    <property type="term" value="C:nucleus"/>
    <property type="evidence" value="ECO:0000250"/>
    <property type="project" value="UniProtKB"/>
</dbReference>
<dbReference type="GO" id="GO:0032991">
    <property type="term" value="C:protein-containing complex"/>
    <property type="evidence" value="ECO:0000250"/>
    <property type="project" value="UniProtKB"/>
</dbReference>
<dbReference type="GO" id="GO:0016528">
    <property type="term" value="C:sarcoplasm"/>
    <property type="evidence" value="ECO:0007669"/>
    <property type="project" value="UniProtKB-SubCell"/>
</dbReference>
<dbReference type="GO" id="GO:0003677">
    <property type="term" value="F:DNA binding"/>
    <property type="evidence" value="ECO:0000250"/>
    <property type="project" value="UniProtKB"/>
</dbReference>
<dbReference type="GO" id="GO:0001228">
    <property type="term" value="F:DNA-binding transcription activator activity, RNA polymerase II-specific"/>
    <property type="evidence" value="ECO:0000250"/>
    <property type="project" value="UniProtKB"/>
</dbReference>
<dbReference type="GO" id="GO:0003700">
    <property type="term" value="F:DNA-binding transcription factor activity"/>
    <property type="evidence" value="ECO:0000250"/>
    <property type="project" value="UniProtKB"/>
</dbReference>
<dbReference type="GO" id="GO:0000981">
    <property type="term" value="F:DNA-binding transcription factor activity, RNA polymerase II-specific"/>
    <property type="evidence" value="ECO:0000250"/>
    <property type="project" value="UniProtKB"/>
</dbReference>
<dbReference type="GO" id="GO:0042826">
    <property type="term" value="F:histone deacetylase binding"/>
    <property type="evidence" value="ECO:0000318"/>
    <property type="project" value="GO_Central"/>
</dbReference>
<dbReference type="GO" id="GO:0046983">
    <property type="term" value="F:protein dimerization activity"/>
    <property type="evidence" value="ECO:0007669"/>
    <property type="project" value="InterPro"/>
</dbReference>
<dbReference type="GO" id="GO:0000978">
    <property type="term" value="F:RNA polymerase II cis-regulatory region sequence-specific DNA binding"/>
    <property type="evidence" value="ECO:0000318"/>
    <property type="project" value="GO_Central"/>
</dbReference>
<dbReference type="GO" id="GO:0000977">
    <property type="term" value="F:RNA polymerase II transcription regulatory region sequence-specific DNA binding"/>
    <property type="evidence" value="ECO:0000250"/>
    <property type="project" value="UniProtKB"/>
</dbReference>
<dbReference type="GO" id="GO:0000976">
    <property type="term" value="F:transcription cis-regulatory region binding"/>
    <property type="evidence" value="ECO:0000250"/>
    <property type="project" value="UniProtKB"/>
</dbReference>
<dbReference type="GO" id="GO:0006915">
    <property type="term" value="P:apoptotic process"/>
    <property type="evidence" value="ECO:0007669"/>
    <property type="project" value="UniProtKB-KW"/>
</dbReference>
<dbReference type="GO" id="GO:0001782">
    <property type="term" value="P:B cell homeostasis"/>
    <property type="evidence" value="ECO:0000250"/>
    <property type="project" value="UniProtKB"/>
</dbReference>
<dbReference type="GO" id="GO:0042100">
    <property type="term" value="P:B cell proliferation"/>
    <property type="evidence" value="ECO:0000250"/>
    <property type="project" value="UniProtKB"/>
</dbReference>
<dbReference type="GO" id="GO:0050853">
    <property type="term" value="P:B cell receptor signaling pathway"/>
    <property type="evidence" value="ECO:0000250"/>
    <property type="project" value="UniProtKB"/>
</dbReference>
<dbReference type="GO" id="GO:0001568">
    <property type="term" value="P:blood vessel development"/>
    <property type="evidence" value="ECO:0000250"/>
    <property type="project" value="UniProtKB"/>
</dbReference>
<dbReference type="GO" id="GO:0001974">
    <property type="term" value="P:blood vessel remodeling"/>
    <property type="evidence" value="ECO:0000250"/>
    <property type="project" value="UniProtKB"/>
</dbReference>
<dbReference type="GO" id="GO:0003211">
    <property type="term" value="P:cardiac ventricle formation"/>
    <property type="evidence" value="ECO:0000250"/>
    <property type="project" value="UniProtKB"/>
</dbReference>
<dbReference type="GO" id="GO:0035051">
    <property type="term" value="P:cardiocyte differentiation"/>
    <property type="evidence" value="ECO:0000250"/>
    <property type="project" value="UniProtKB"/>
</dbReference>
<dbReference type="GO" id="GO:0030154">
    <property type="term" value="P:cell differentiation"/>
    <property type="evidence" value="ECO:0000318"/>
    <property type="project" value="GO_Central"/>
</dbReference>
<dbReference type="GO" id="GO:0071277">
    <property type="term" value="P:cellular response to calcium ion"/>
    <property type="evidence" value="ECO:0000250"/>
    <property type="project" value="UniProtKB"/>
</dbReference>
<dbReference type="GO" id="GO:0071498">
    <property type="term" value="P:cellular response to fluid shear stress"/>
    <property type="evidence" value="ECO:0000250"/>
    <property type="project" value="UniProtKB"/>
</dbReference>
<dbReference type="GO" id="GO:0071222">
    <property type="term" value="P:cellular response to lipopolysaccharide"/>
    <property type="evidence" value="ECO:0000250"/>
    <property type="project" value="UniProtKB"/>
</dbReference>
<dbReference type="GO" id="GO:0071374">
    <property type="term" value="P:cellular response to parathyroid hormone stimulus"/>
    <property type="evidence" value="ECO:0000250"/>
    <property type="project" value="UniProtKB"/>
</dbReference>
<dbReference type="GO" id="GO:0071560">
    <property type="term" value="P:cellular response to transforming growth factor beta stimulus"/>
    <property type="evidence" value="ECO:0000250"/>
    <property type="project" value="UniProtKB"/>
</dbReference>
<dbReference type="GO" id="GO:0035984">
    <property type="term" value="P:cellular response to trichostatin A"/>
    <property type="evidence" value="ECO:0000250"/>
    <property type="project" value="UniProtKB"/>
</dbReference>
<dbReference type="GO" id="GO:0071466">
    <property type="term" value="P:cellular response to xenobiotic stimulus"/>
    <property type="evidence" value="ECO:0000250"/>
    <property type="project" value="UniProtKB"/>
</dbReference>
<dbReference type="GO" id="GO:0002062">
    <property type="term" value="P:chondrocyte differentiation"/>
    <property type="evidence" value="ECO:0000250"/>
    <property type="project" value="UniProtKB"/>
</dbReference>
<dbReference type="GO" id="GO:0001958">
    <property type="term" value="P:endochondral ossification"/>
    <property type="evidence" value="ECO:0000250"/>
    <property type="project" value="UniProtKB"/>
</dbReference>
<dbReference type="GO" id="GO:2001013">
    <property type="term" value="P:epithelial cell proliferation involved in renal tubule morphogenesis"/>
    <property type="evidence" value="ECO:0000250"/>
    <property type="project" value="UniProtKB"/>
</dbReference>
<dbReference type="GO" id="GO:0002467">
    <property type="term" value="P:germinal center formation"/>
    <property type="evidence" value="ECO:0000250"/>
    <property type="project" value="UniProtKB"/>
</dbReference>
<dbReference type="GO" id="GO:0072102">
    <property type="term" value="P:glomerulus morphogenesis"/>
    <property type="evidence" value="ECO:0000250"/>
    <property type="project" value="UniProtKB"/>
</dbReference>
<dbReference type="GO" id="GO:0007507">
    <property type="term" value="P:heart development"/>
    <property type="evidence" value="ECO:0000250"/>
    <property type="project" value="UniProtKB"/>
</dbReference>
<dbReference type="GO" id="GO:0001947">
    <property type="term" value="P:heart looping"/>
    <property type="evidence" value="ECO:0000250"/>
    <property type="project" value="UniProtKB"/>
</dbReference>
<dbReference type="GO" id="GO:0006959">
    <property type="term" value="P:humoral immune response"/>
    <property type="evidence" value="ECO:0000250"/>
    <property type="project" value="UniProtKB"/>
</dbReference>
<dbReference type="GO" id="GO:0007611">
    <property type="term" value="P:learning or memory"/>
    <property type="evidence" value="ECO:0000250"/>
    <property type="project" value="UniProtKB"/>
</dbReference>
<dbReference type="GO" id="GO:0000165">
    <property type="term" value="P:MAPK cascade"/>
    <property type="evidence" value="ECO:0000250"/>
    <property type="project" value="UniProtKB"/>
</dbReference>
<dbReference type="GO" id="GO:0030318">
    <property type="term" value="P:melanocyte differentiation"/>
    <property type="evidence" value="ECO:0000250"/>
    <property type="project" value="UniProtKB"/>
</dbReference>
<dbReference type="GO" id="GO:0007521">
    <property type="term" value="P:muscle cell fate determination"/>
    <property type="evidence" value="ECO:0000250"/>
    <property type="project" value="UniProtKB"/>
</dbReference>
<dbReference type="GO" id="GO:0010629">
    <property type="term" value="P:negative regulation of gene expression"/>
    <property type="evidence" value="ECO:0000250"/>
    <property type="project" value="UniProtKB"/>
</dbReference>
<dbReference type="GO" id="GO:0043524">
    <property type="term" value="P:negative regulation of neuron apoptotic process"/>
    <property type="evidence" value="ECO:0000250"/>
    <property type="project" value="UniProtKB"/>
</dbReference>
<dbReference type="GO" id="GO:0030279">
    <property type="term" value="P:negative regulation of ossification"/>
    <property type="evidence" value="ECO:0000250"/>
    <property type="project" value="UniProtKB"/>
</dbReference>
<dbReference type="GO" id="GO:0000122">
    <property type="term" value="P:negative regulation of transcription by RNA polymerase II"/>
    <property type="evidence" value="ECO:0000250"/>
    <property type="project" value="UniProtKB"/>
</dbReference>
<dbReference type="GO" id="GO:0072160">
    <property type="term" value="P:nephron tubule epithelial cell differentiation"/>
    <property type="evidence" value="ECO:0000250"/>
    <property type="project" value="UniProtKB"/>
</dbReference>
<dbReference type="GO" id="GO:0014033">
    <property type="term" value="P:neural crest cell differentiation"/>
    <property type="evidence" value="ECO:0000250"/>
    <property type="project" value="UniProtKB"/>
</dbReference>
<dbReference type="GO" id="GO:0048666">
    <property type="term" value="P:neuron development"/>
    <property type="evidence" value="ECO:0000250"/>
    <property type="project" value="UniProtKB"/>
</dbReference>
<dbReference type="GO" id="GO:0030182">
    <property type="term" value="P:neuron differentiation"/>
    <property type="evidence" value="ECO:0000250"/>
    <property type="project" value="UniProtKB"/>
</dbReference>
<dbReference type="GO" id="GO:0001649">
    <property type="term" value="P:osteoblast differentiation"/>
    <property type="evidence" value="ECO:0000250"/>
    <property type="project" value="UniProtKB"/>
</dbReference>
<dbReference type="GO" id="GO:0003151">
    <property type="term" value="P:outflow tract morphogenesis"/>
    <property type="evidence" value="ECO:0000250"/>
    <property type="project" value="UniProtKB"/>
</dbReference>
<dbReference type="GO" id="GO:0030220">
    <property type="term" value="P:platelet formation"/>
    <property type="evidence" value="ECO:0000250"/>
    <property type="project" value="UniProtKB"/>
</dbReference>
<dbReference type="GO" id="GO:0030890">
    <property type="term" value="P:positive regulation of B cell proliferation"/>
    <property type="evidence" value="ECO:0000250"/>
    <property type="project" value="UniProtKB"/>
</dbReference>
<dbReference type="GO" id="GO:2000987">
    <property type="term" value="P:positive regulation of behavioral fear response"/>
    <property type="evidence" value="ECO:0000250"/>
    <property type="project" value="UniProtKB"/>
</dbReference>
<dbReference type="GO" id="GO:0030501">
    <property type="term" value="P:positive regulation of bone mineralization"/>
    <property type="evidence" value="ECO:0000250"/>
    <property type="project" value="UniProtKB"/>
</dbReference>
<dbReference type="GO" id="GO:2000727">
    <property type="term" value="P:positive regulation of cardiac muscle cell differentiation"/>
    <property type="evidence" value="ECO:0000250"/>
    <property type="project" value="UniProtKB"/>
</dbReference>
<dbReference type="GO" id="GO:0060045">
    <property type="term" value="P:positive regulation of cardiac muscle cell proliferation"/>
    <property type="evidence" value="ECO:0000250"/>
    <property type="project" value="UniProtKB"/>
</dbReference>
<dbReference type="GO" id="GO:0045893">
    <property type="term" value="P:positive regulation of DNA-templated transcription"/>
    <property type="evidence" value="ECO:0000250"/>
    <property type="project" value="UniProtKB"/>
</dbReference>
<dbReference type="GO" id="GO:0010628">
    <property type="term" value="P:positive regulation of gene expression"/>
    <property type="evidence" value="ECO:0000250"/>
    <property type="project" value="UniProtKB"/>
</dbReference>
<dbReference type="GO" id="GO:2000111">
    <property type="term" value="P:positive regulation of macrophage apoptotic process"/>
    <property type="evidence" value="ECO:0000250"/>
    <property type="project" value="UniProtKB"/>
</dbReference>
<dbReference type="GO" id="GO:0045663">
    <property type="term" value="P:positive regulation of myoblast differentiation"/>
    <property type="evidence" value="ECO:0000250"/>
    <property type="project" value="UniProtKB"/>
</dbReference>
<dbReference type="GO" id="GO:0045666">
    <property type="term" value="P:positive regulation of neuron differentiation"/>
    <property type="evidence" value="ECO:0000250"/>
    <property type="project" value="UniProtKB"/>
</dbReference>
<dbReference type="GO" id="GO:0045669">
    <property type="term" value="P:positive regulation of osteoblast differentiation"/>
    <property type="evidence" value="ECO:0000250"/>
    <property type="project" value="UniProtKB"/>
</dbReference>
<dbReference type="GO" id="GO:2001016">
    <property type="term" value="P:positive regulation of skeletal muscle cell differentiation"/>
    <property type="evidence" value="ECO:0000250"/>
    <property type="project" value="UniProtKB"/>
</dbReference>
<dbReference type="GO" id="GO:0048643">
    <property type="term" value="P:positive regulation of skeletal muscle tissue development"/>
    <property type="evidence" value="ECO:0000250"/>
    <property type="project" value="UniProtKB"/>
</dbReference>
<dbReference type="GO" id="GO:0045944">
    <property type="term" value="P:positive regulation of transcription by RNA polymerase II"/>
    <property type="evidence" value="ECO:0000250"/>
    <property type="project" value="UniProtKB"/>
</dbReference>
<dbReference type="GO" id="GO:0003138">
    <property type="term" value="P:primary heart field specification"/>
    <property type="evidence" value="ECO:0000250"/>
    <property type="project" value="UniProtKB"/>
</dbReference>
<dbReference type="GO" id="GO:0002634">
    <property type="term" value="P:regulation of germinal center formation"/>
    <property type="evidence" value="ECO:0000250"/>
    <property type="project" value="UniProtKB"/>
</dbReference>
<dbReference type="GO" id="GO:0045652">
    <property type="term" value="P:regulation of megakaryocyte differentiation"/>
    <property type="evidence" value="ECO:0000250"/>
    <property type="project" value="UniProtKB"/>
</dbReference>
<dbReference type="GO" id="GO:0060025">
    <property type="term" value="P:regulation of synaptic activity"/>
    <property type="evidence" value="ECO:0000250"/>
    <property type="project" value="UniProtKB"/>
</dbReference>
<dbReference type="GO" id="GO:0061333">
    <property type="term" value="P:renal tubule morphogenesis"/>
    <property type="evidence" value="ECO:0000250"/>
    <property type="project" value="UniProtKB"/>
</dbReference>
<dbReference type="GO" id="GO:0003139">
    <property type="term" value="P:secondary heart field specification"/>
    <property type="evidence" value="ECO:0000250"/>
    <property type="project" value="UniProtKB"/>
</dbReference>
<dbReference type="GO" id="GO:0003185">
    <property type="term" value="P:sinoatrial valve morphogenesis"/>
    <property type="evidence" value="ECO:0000250"/>
    <property type="project" value="UniProtKB"/>
</dbReference>
<dbReference type="GO" id="GO:0007519">
    <property type="term" value="P:skeletal muscle tissue development"/>
    <property type="evidence" value="ECO:0000250"/>
    <property type="project" value="UniProtKB"/>
</dbReference>
<dbReference type="GO" id="GO:0051145">
    <property type="term" value="P:smooth muscle cell differentiation"/>
    <property type="evidence" value="ECO:0000250"/>
    <property type="project" value="UniProtKB"/>
</dbReference>
<dbReference type="GO" id="GO:0055012">
    <property type="term" value="P:ventricular cardiac muscle cell differentiation"/>
    <property type="evidence" value="ECO:0000250"/>
    <property type="project" value="UniProtKB"/>
</dbReference>
<dbReference type="CDD" id="cd00265">
    <property type="entry name" value="MADS_MEF2_like"/>
    <property type="match status" value="1"/>
</dbReference>
<dbReference type="FunFam" id="3.40.1810.10:FF:000001">
    <property type="entry name" value="Myocyte-specific enhancer factor 2A homolog"/>
    <property type="match status" value="1"/>
</dbReference>
<dbReference type="Gene3D" id="3.40.1810.10">
    <property type="entry name" value="Transcription factor, MADS-box"/>
    <property type="match status" value="1"/>
</dbReference>
<dbReference type="InterPro" id="IPR022102">
    <property type="entry name" value="HJURP_C"/>
</dbReference>
<dbReference type="InterPro" id="IPR033896">
    <property type="entry name" value="MEF2-like_N"/>
</dbReference>
<dbReference type="InterPro" id="IPR002100">
    <property type="entry name" value="TF_MADSbox"/>
</dbReference>
<dbReference type="InterPro" id="IPR036879">
    <property type="entry name" value="TF_MADSbox_sf"/>
</dbReference>
<dbReference type="PANTHER" id="PTHR11945">
    <property type="entry name" value="MADS BOX PROTEIN"/>
    <property type="match status" value="1"/>
</dbReference>
<dbReference type="PANTHER" id="PTHR11945:SF534">
    <property type="entry name" value="MYOCYTE-SPECIFIC ENHANCER FACTOR 2"/>
    <property type="match status" value="1"/>
</dbReference>
<dbReference type="Pfam" id="PF12347">
    <property type="entry name" value="HJURP_C"/>
    <property type="match status" value="1"/>
</dbReference>
<dbReference type="Pfam" id="PF00319">
    <property type="entry name" value="SRF-TF"/>
    <property type="match status" value="1"/>
</dbReference>
<dbReference type="PRINTS" id="PR00404">
    <property type="entry name" value="MADSDOMAIN"/>
</dbReference>
<dbReference type="SMART" id="SM00432">
    <property type="entry name" value="MADS"/>
    <property type="match status" value="1"/>
</dbReference>
<dbReference type="SUPFAM" id="SSF55455">
    <property type="entry name" value="SRF-like"/>
    <property type="match status" value="1"/>
</dbReference>
<dbReference type="PROSITE" id="PS00350">
    <property type="entry name" value="MADS_BOX_1"/>
    <property type="match status" value="1"/>
</dbReference>
<dbReference type="PROSITE" id="PS50066">
    <property type="entry name" value="MADS_BOX_2"/>
    <property type="match status" value="1"/>
</dbReference>
<comment type="function">
    <text evidence="3 4">Transcription activator which binds specifically to the MEF2 element present in the regulatory regions of many muscle-specific genes. Controls cardiac morphogenesis and myogenesis, and is also involved in vascular development. Enhances transcriptional activation mediated by SOX18. Plays an essential role in hippocampal-dependent learning and memory by suppressing the number of excitatory synapses and thus regulating basal and evoked synaptic transmission. Crucial for normal neuronal development, distribution, and electrical activity in the neocortex. Necessary for proper development of megakaryocytes and platelets and for bone marrow B-lymphopoiesis. Required for B-cell survival and proliferation in response to BCR stimulation, efficient IgG1 antibody responses to T-cell-dependent antigens and for normal induction of germinal center B-cells. May also be involved in neurogenesis and in the development of cortical architecture (By similarity).</text>
</comment>
<comment type="subunit">
    <text evidence="2 3 4">Forms a complex with class II HDACs in undifferentiating cells. On myogenic differentiation, HDACs are released into the cytoplasm allowing MEF2s to interact with other proteins for activation. Interacts with EP300 in differentiating cells; the interaction acetylates MEF2C leading to increased DNA binding and activation (By similarity). Interacts with HDAC7 and CARM1 (By similarity). Interacts with HDAC4, HDAC7 and HDAC9; the interaction with HDACs represses transcriptional activity (By similarity). Interacts with LPIN1. Interacts with MYOCD. Interacts with AKAP13. Interacts with FOXK1; the interaction inhibits MEF2C transactivation activity (By similarity). Interacts (via N-terminus) with HABP4; this interaction decreases DNA-binding activity of MEF2C in myocardial cells in response to mechanical stress (By similarity). Interacts with JPH2; interaction specifically takes place with the Junctophilin-2 N-terminal fragment cleavage product of JPH2 (By similarity). Interacts (via MADS box) with SOX18 (By similarity). Interacts with PHF7; the interaction promotes MEF2C binding to its transcription targets (By similarity).</text>
</comment>
<comment type="subcellular location">
    <subcellularLocation>
        <location evidence="2">Nucleus</location>
    </subcellularLocation>
    <subcellularLocation>
        <location evidence="2">Cytoplasm</location>
        <location evidence="2">Sarcoplasm</location>
    </subcellularLocation>
</comment>
<comment type="domain">
    <text evidence="1">The beta domain is required for enhancement of transcriptional activity.</text>
</comment>
<comment type="PTM">
    <text evidence="1">Phosphorylation on Ser-59 enhances DNA binding activity.</text>
</comment>
<comment type="PTM">
    <text evidence="1">Acetylated by p300 on several sites in diffentiating myocytes. Acetylation on Lys-4 increases DNA binding and transactivation (By similarity).</text>
</comment>
<comment type="PTM">
    <text evidence="1">Proteolytically cleaved in cerebellar granule neurons, probably by caspase 7, following neurotoxicity.</text>
</comment>
<comment type="similarity">
    <text evidence="8">Belongs to the MEF2 family.</text>
</comment>
<keyword id="KW-0007">Acetylation</keyword>
<keyword id="KW-0010">Activator</keyword>
<keyword id="KW-0053">Apoptosis</keyword>
<keyword id="KW-0963">Cytoplasm</keyword>
<keyword id="KW-0217">Developmental protein</keyword>
<keyword id="KW-0221">Differentiation</keyword>
<keyword id="KW-0238">DNA-binding</keyword>
<keyword id="KW-0524">Neurogenesis</keyword>
<keyword id="KW-0539">Nucleus</keyword>
<keyword id="KW-0597">Phosphoprotein</keyword>
<keyword id="KW-1185">Reference proteome</keyword>
<keyword id="KW-0804">Transcription</keyword>
<keyword id="KW-0805">Transcription regulation</keyword>
<reference key="1">
    <citation type="submission" date="2006-01" db="EMBL/GenBank/DDBJ databases">
        <authorList>
            <consortium name="NIH - Mammalian Gene Collection (MGC) project"/>
        </authorList>
    </citation>
    <scope>NUCLEOTIDE SEQUENCE [LARGE SCALE MRNA]</scope>
    <source>
        <strain>Hereford</strain>
        <tissue>Hypothalamus</tissue>
    </source>
</reference>
<proteinExistence type="evidence at transcript level"/>
<feature type="chain" id="PRO_0000366972" description="Myocyte-specific enhancer factor 2C">
    <location>
        <begin position="1"/>
        <end position="441"/>
    </location>
</feature>
<feature type="domain" description="MADS-box" evidence="6">
    <location>
        <begin position="1"/>
        <end position="61"/>
    </location>
</feature>
<feature type="DNA-binding region" description="Mef2-type" evidence="5">
    <location>
        <begin position="58"/>
        <end position="86"/>
    </location>
</feature>
<feature type="region of interest" description="Disordered" evidence="7">
    <location>
        <begin position="91"/>
        <end position="116"/>
    </location>
</feature>
<feature type="region of interest" description="Disordered" evidence="7">
    <location>
        <begin position="180"/>
        <end position="224"/>
    </location>
</feature>
<feature type="region of interest" description="Beta domain" evidence="1">
    <location>
        <begin position="271"/>
        <end position="278"/>
    </location>
</feature>
<feature type="region of interest" description="Disordered" evidence="7">
    <location>
        <begin position="353"/>
        <end position="441"/>
    </location>
</feature>
<feature type="compositionally biased region" description="Polar residues" evidence="7">
    <location>
        <begin position="362"/>
        <end position="377"/>
    </location>
</feature>
<feature type="compositionally biased region" description="Low complexity" evidence="7">
    <location>
        <begin position="387"/>
        <end position="400"/>
    </location>
</feature>
<feature type="compositionally biased region" description="Basic and acidic residues" evidence="7">
    <location>
        <begin position="401"/>
        <end position="411"/>
    </location>
</feature>
<feature type="site" description="Cleavage" evidence="8">
    <location>
        <begin position="400"/>
        <end position="401"/>
    </location>
</feature>
<feature type="modified residue" description="N6-acetyllysine" evidence="4">
    <location>
        <position position="4"/>
    </location>
</feature>
<feature type="modified residue" description="Phosphoserine; by CK2" evidence="4">
    <location>
        <position position="59"/>
    </location>
</feature>
<feature type="modified residue" description="Phosphoserine" evidence="4">
    <location>
        <position position="98"/>
    </location>
</feature>
<feature type="modified residue" description="Phosphoserine" evidence="4">
    <location>
        <position position="106"/>
    </location>
</feature>
<feature type="modified residue" description="Phosphoserine" evidence="4">
    <location>
        <position position="110"/>
    </location>
</feature>
<feature type="modified residue" description="N6-acetyllysine" evidence="3">
    <location>
        <position position="116"/>
    </location>
</feature>
<feature type="modified residue" description="N6-acetyllysine" evidence="3">
    <location>
        <position position="119"/>
    </location>
</feature>
<feature type="modified residue" description="Phosphoserine" evidence="3">
    <location>
        <position position="222"/>
    </location>
</feature>
<feature type="modified residue" description="Phosphoserine" evidence="3">
    <location>
        <position position="228"/>
    </location>
</feature>
<feature type="modified residue" description="N6-acetyllysine" evidence="3">
    <location>
        <position position="234"/>
    </location>
</feature>
<feature type="modified residue" description="N6-acetyllysine" evidence="3">
    <location>
        <position position="239"/>
    </location>
</feature>
<feature type="modified residue" description="Phosphoserine" evidence="3">
    <location>
        <position position="240"/>
    </location>
</feature>
<feature type="modified residue" description="N6-acetyllysine" evidence="3">
    <location>
        <position position="252"/>
    </location>
</feature>
<feature type="modified residue" description="N6-acetyllysine" evidence="3">
    <location>
        <position position="264"/>
    </location>
</feature>
<feature type="modified residue" description="Phosphothreonine; by MAPK7 and MAPK14" evidence="3">
    <location>
        <position position="293"/>
    </location>
</feature>
<feature type="modified residue" description="Phosphothreonine; by MAPK7 and MAPK14" evidence="3">
    <location>
        <position position="300"/>
    </location>
</feature>
<feature type="modified residue" description="Phosphoserine; by MAPK7" evidence="3">
    <location>
        <position position="387"/>
    </location>
</feature>
<feature type="modified residue" description="Phosphoserine" evidence="3">
    <location>
        <position position="413"/>
    </location>
</feature>
<name>MEF2C_BOVIN</name>
<organism>
    <name type="scientific">Bos taurus</name>
    <name type="common">Bovine</name>
    <dbReference type="NCBI Taxonomy" id="9913"/>
    <lineage>
        <taxon>Eukaryota</taxon>
        <taxon>Metazoa</taxon>
        <taxon>Chordata</taxon>
        <taxon>Craniata</taxon>
        <taxon>Vertebrata</taxon>
        <taxon>Euteleostomi</taxon>
        <taxon>Mammalia</taxon>
        <taxon>Eutheria</taxon>
        <taxon>Laurasiatheria</taxon>
        <taxon>Artiodactyla</taxon>
        <taxon>Ruminantia</taxon>
        <taxon>Pecora</taxon>
        <taxon>Bovidae</taxon>
        <taxon>Bovinae</taxon>
        <taxon>Bos</taxon>
    </lineage>
</organism>
<accession>Q2KIA0</accession>
<protein>
    <recommendedName>
        <fullName evidence="8">Myocyte-specific enhancer factor 2C</fullName>
    </recommendedName>
</protein>
<evidence type="ECO:0000250" key="1"/>
<evidence type="ECO:0000250" key="2">
    <source>
        <dbReference type="UniProtKB" id="A0A096MJY4"/>
    </source>
</evidence>
<evidence type="ECO:0000250" key="3">
    <source>
        <dbReference type="UniProtKB" id="Q06413"/>
    </source>
</evidence>
<evidence type="ECO:0000250" key="4">
    <source>
        <dbReference type="UniProtKB" id="Q8CFN5"/>
    </source>
</evidence>
<evidence type="ECO:0000255" key="5"/>
<evidence type="ECO:0000255" key="6">
    <source>
        <dbReference type="PROSITE-ProRule" id="PRU00251"/>
    </source>
</evidence>
<evidence type="ECO:0000256" key="7">
    <source>
        <dbReference type="SAM" id="MobiDB-lite"/>
    </source>
</evidence>
<evidence type="ECO:0000305" key="8"/>